<name>PSTS_STAAN</name>
<sequence>MKKWQFVGTTALGATLLLGACGGGNGGSGNSDLKGEAKGDGSSTVAPIVEKLNEKWAQDHSDAKISAGQAGTGAGFQKFIAGDIDFADASRPIKDEEKQKLQDKNIKYKEFKIAQDGVTVAVNKENDFVDELDKQQLKAIYSGKAKTWKDVNSKWPDKKINAVSPNSSHGTYDFFENEVMNKEDIKAEKNADTNAIVSSVTKNKEGIGYFGYNFYVQNKDKLKEVKIKDENGKATEPTKKTIQDNSYALSRPLFIYVNEKALKDNKVMSEFIKFVLEDKGKAAEEAGYVAAPEKTYKSQLDDLKAFIDKNQKSDDKKSDDKKSEDKK</sequence>
<proteinExistence type="evidence at protein level"/>
<protein>
    <recommendedName>
        <fullName>Phosphate-binding protein PstS</fullName>
        <shortName>PBP</shortName>
    </recommendedName>
</protein>
<evidence type="ECO:0000250" key="1"/>
<evidence type="ECO:0000255" key="2">
    <source>
        <dbReference type="PROSITE-ProRule" id="PRU00303"/>
    </source>
</evidence>
<evidence type="ECO:0000256" key="3">
    <source>
        <dbReference type="SAM" id="MobiDB-lite"/>
    </source>
</evidence>
<evidence type="ECO:0000305" key="4"/>
<gene>
    <name type="primary">pstS</name>
    <name type="ordered locus">SA1221</name>
</gene>
<keyword id="KW-1003">Cell membrane</keyword>
<keyword id="KW-0449">Lipoprotein</keyword>
<keyword id="KW-0472">Membrane</keyword>
<keyword id="KW-0564">Palmitate</keyword>
<keyword id="KW-0592">Phosphate transport</keyword>
<keyword id="KW-0732">Signal</keyword>
<keyword id="KW-0813">Transport</keyword>
<reference key="1">
    <citation type="journal article" date="2001" name="Lancet">
        <title>Whole genome sequencing of meticillin-resistant Staphylococcus aureus.</title>
        <authorList>
            <person name="Kuroda M."/>
            <person name="Ohta T."/>
            <person name="Uchiyama I."/>
            <person name="Baba T."/>
            <person name="Yuzawa H."/>
            <person name="Kobayashi I."/>
            <person name="Cui L."/>
            <person name="Oguchi A."/>
            <person name="Aoki K."/>
            <person name="Nagai Y."/>
            <person name="Lian J.-Q."/>
            <person name="Ito T."/>
            <person name="Kanamori M."/>
            <person name="Matsumaru H."/>
            <person name="Maruyama A."/>
            <person name="Murakami H."/>
            <person name="Hosoyama A."/>
            <person name="Mizutani-Ui Y."/>
            <person name="Takahashi N.K."/>
            <person name="Sawano T."/>
            <person name="Inoue R."/>
            <person name="Kaito C."/>
            <person name="Sekimizu K."/>
            <person name="Hirakawa H."/>
            <person name="Kuhara S."/>
            <person name="Goto S."/>
            <person name="Yabuzaki J."/>
            <person name="Kanehisa M."/>
            <person name="Yamashita A."/>
            <person name="Oshima K."/>
            <person name="Furuya K."/>
            <person name="Yoshino C."/>
            <person name="Shiba T."/>
            <person name="Hattori M."/>
            <person name="Ogasawara N."/>
            <person name="Hayashi H."/>
            <person name="Hiramatsu K."/>
        </authorList>
    </citation>
    <scope>NUCLEOTIDE SEQUENCE [LARGE SCALE GENOMIC DNA]</scope>
    <source>
        <strain>N315</strain>
    </source>
</reference>
<reference key="2">
    <citation type="submission" date="2007-10" db="UniProtKB">
        <title>Shotgun proteomic analysis of total and membrane protein extracts of S. aureus strain N315.</title>
        <authorList>
            <person name="Vaezzadeh A.R."/>
            <person name="Deshusses J."/>
            <person name="Lescuyer P."/>
            <person name="Hochstrasser D.F."/>
        </authorList>
    </citation>
    <scope>IDENTIFICATION BY MASS SPECTROMETRY [LARGE SCALE ANALYSIS]</scope>
    <source>
        <strain>N315</strain>
    </source>
</reference>
<accession>Q7A5Q2</accession>
<comment type="function">
    <text evidence="1">Part of the ABC transporter complex PstSACB involved in phosphate import.</text>
</comment>
<comment type="subunit">
    <text evidence="4">The complex is composed of two ATP-binding proteins (PstB), two transmembrane proteins (PstC and PstA) and a solute-binding protein (PstS).</text>
</comment>
<comment type="subcellular location">
    <subcellularLocation>
        <location evidence="4">Cell membrane</location>
        <topology evidence="4">Lipid-anchor</topology>
    </subcellularLocation>
</comment>
<comment type="similarity">
    <text evidence="4">Belongs to the PstS family.</text>
</comment>
<organism>
    <name type="scientific">Staphylococcus aureus (strain N315)</name>
    <dbReference type="NCBI Taxonomy" id="158879"/>
    <lineage>
        <taxon>Bacteria</taxon>
        <taxon>Bacillati</taxon>
        <taxon>Bacillota</taxon>
        <taxon>Bacilli</taxon>
        <taxon>Bacillales</taxon>
        <taxon>Staphylococcaceae</taxon>
        <taxon>Staphylococcus</taxon>
    </lineage>
</organism>
<dbReference type="EMBL" id="BA000018">
    <property type="protein sequence ID" value="BAB42481.1"/>
    <property type="molecule type" value="Genomic_DNA"/>
</dbReference>
<dbReference type="PIR" id="E89915">
    <property type="entry name" value="E89915"/>
</dbReference>
<dbReference type="RefSeq" id="WP_000759232.1">
    <property type="nucleotide sequence ID" value="NC_002745.2"/>
</dbReference>
<dbReference type="SMR" id="Q7A5Q2"/>
<dbReference type="EnsemblBacteria" id="BAB42481">
    <property type="protein sequence ID" value="BAB42481"/>
    <property type="gene ID" value="BAB42481"/>
</dbReference>
<dbReference type="KEGG" id="sau:SA1221"/>
<dbReference type="HOGENOM" id="CLU_026228_1_1_9"/>
<dbReference type="PHI-base" id="PHI:11311"/>
<dbReference type="PHI-base" id="PHI:9447"/>
<dbReference type="PHI-base" id="PHI:9757"/>
<dbReference type="GO" id="GO:0005886">
    <property type="term" value="C:plasma membrane"/>
    <property type="evidence" value="ECO:0007669"/>
    <property type="project" value="UniProtKB-SubCell"/>
</dbReference>
<dbReference type="GO" id="GO:0042301">
    <property type="term" value="F:phosphate ion binding"/>
    <property type="evidence" value="ECO:0007669"/>
    <property type="project" value="InterPro"/>
</dbReference>
<dbReference type="GO" id="GO:0006817">
    <property type="term" value="P:phosphate ion transport"/>
    <property type="evidence" value="ECO:0007669"/>
    <property type="project" value="UniProtKB-KW"/>
</dbReference>
<dbReference type="CDD" id="cd13654">
    <property type="entry name" value="PBP2_phosphate_like_2"/>
    <property type="match status" value="1"/>
</dbReference>
<dbReference type="Gene3D" id="3.40.190.10">
    <property type="entry name" value="Periplasmic binding protein-like II"/>
    <property type="match status" value="2"/>
</dbReference>
<dbReference type="InterPro" id="IPR024370">
    <property type="entry name" value="PBP_domain"/>
</dbReference>
<dbReference type="InterPro" id="IPR011862">
    <property type="entry name" value="Phos-bd"/>
</dbReference>
<dbReference type="InterPro" id="IPR050811">
    <property type="entry name" value="Phosphate_ABC_transporter"/>
</dbReference>
<dbReference type="NCBIfam" id="TIGR02136">
    <property type="entry name" value="ptsS_2"/>
    <property type="match status" value="1"/>
</dbReference>
<dbReference type="PANTHER" id="PTHR30570">
    <property type="entry name" value="PERIPLASMIC PHOSPHATE BINDING COMPONENT OF PHOSPHATE ABC TRANSPORTER"/>
    <property type="match status" value="1"/>
</dbReference>
<dbReference type="PANTHER" id="PTHR30570:SF1">
    <property type="entry name" value="PHOSPHATE-BINDING PROTEIN PSTS"/>
    <property type="match status" value="1"/>
</dbReference>
<dbReference type="Pfam" id="PF12849">
    <property type="entry name" value="PBP_like_2"/>
    <property type="match status" value="1"/>
</dbReference>
<dbReference type="SUPFAM" id="SSF53850">
    <property type="entry name" value="Periplasmic binding protein-like II"/>
    <property type="match status" value="1"/>
</dbReference>
<dbReference type="PROSITE" id="PS51257">
    <property type="entry name" value="PROKAR_LIPOPROTEIN"/>
    <property type="match status" value="1"/>
</dbReference>
<feature type="signal peptide" evidence="2">
    <location>
        <begin position="1"/>
        <end position="20"/>
    </location>
</feature>
<feature type="chain" id="PRO_0000281658" description="Phosphate-binding protein PstS">
    <location>
        <begin position="21"/>
        <end position="327"/>
    </location>
</feature>
<feature type="region of interest" description="Disordered" evidence="3">
    <location>
        <begin position="307"/>
        <end position="327"/>
    </location>
</feature>
<feature type="lipid moiety-binding region" description="N-palmitoyl cysteine" evidence="2">
    <location>
        <position position="21"/>
    </location>
</feature>
<feature type="lipid moiety-binding region" description="S-diacylglycerol cysteine" evidence="2">
    <location>
        <position position="21"/>
    </location>
</feature>